<evidence type="ECO:0000255" key="1">
    <source>
        <dbReference type="HAMAP-Rule" id="MF_02016"/>
    </source>
</evidence>
<reference key="1">
    <citation type="submission" date="2008-02" db="EMBL/GenBank/DDBJ databases">
        <title>Complete sequence of Escherichia coli C str. ATCC 8739.</title>
        <authorList>
            <person name="Copeland A."/>
            <person name="Lucas S."/>
            <person name="Lapidus A."/>
            <person name="Glavina del Rio T."/>
            <person name="Dalin E."/>
            <person name="Tice H."/>
            <person name="Bruce D."/>
            <person name="Goodwin L."/>
            <person name="Pitluck S."/>
            <person name="Kiss H."/>
            <person name="Brettin T."/>
            <person name="Detter J.C."/>
            <person name="Han C."/>
            <person name="Kuske C.R."/>
            <person name="Schmutz J."/>
            <person name="Larimer F."/>
            <person name="Land M."/>
            <person name="Hauser L."/>
            <person name="Kyrpides N."/>
            <person name="Mikhailova N."/>
            <person name="Ingram L."/>
            <person name="Richardson P."/>
        </authorList>
    </citation>
    <scope>NUCLEOTIDE SEQUENCE [LARGE SCALE GENOMIC DNA]</scope>
    <source>
        <strain>ATCC 8739 / DSM 1576 / NBRC 3972 / NCIMB 8545 / WDCM 00012 / Crooks</strain>
    </source>
</reference>
<organism>
    <name type="scientific">Escherichia coli (strain ATCC 8739 / DSM 1576 / NBRC 3972 / NCIMB 8545 / WDCM 00012 / Crooks)</name>
    <dbReference type="NCBI Taxonomy" id="481805"/>
    <lineage>
        <taxon>Bacteria</taxon>
        <taxon>Pseudomonadati</taxon>
        <taxon>Pseudomonadota</taxon>
        <taxon>Gammaproteobacteria</taxon>
        <taxon>Enterobacterales</taxon>
        <taxon>Enterobacteriaceae</taxon>
        <taxon>Escherichia</taxon>
    </lineage>
</organism>
<sequence>MKKLKINYLFIGILALLLAVALWPSIPWFGKADNRIAAIQARGELRVSTIHTPLTYNEINGKPFGLDYELAKQFADYLGVKLKVTVRQNISQLFDDLDNGNADLLAAGLVYNSERVKNYQPGPTYYSVSQQLVYKVGQYRPRTLGNLTAEQLTVAPGHVVVNDLQTLKETKFPELSWKVDDKKGSAELMEDVIEGKLDYTIADSVAISLFQRVHPELAVALDITDEQPVTWFSPLDGDNTLSAALLDFFNEMNEDGTLARIEEKYLGHGDDFDYVDTRTFLRAVDAVLPQLKPLFEKYAEEIDWRLLAAIAYQESHWDAQATSPTGVRGMMMLTKNTAQSLGITDRTDAEQSISGGVRYLQDMMSKVPESVPENERIWFALAAYNMGYAHMLDARALTAKTKGNPDSWADVKQRLPLLSQKPYYSKLTYGYARGHEAYAYVENIRKYQISLVGYLQEKEKQATEAAMQLAQDYPAVSPTELGKEKFPFLSFLSQSSSNYLTHSPSLLFSRKGSEEKQN</sequence>
<feature type="signal peptide" evidence="1">
    <location>
        <begin position="1"/>
        <end position="21"/>
    </location>
</feature>
<feature type="chain" id="PRO_5000314087" description="Membrane-bound lytic murein transglycosylase F">
    <location>
        <begin position="22"/>
        <end position="518"/>
    </location>
</feature>
<feature type="region of interest" description="Non-LT domain" evidence="1">
    <location>
        <begin position="22"/>
        <end position="269"/>
    </location>
</feature>
<feature type="region of interest" description="LT domain" evidence="1">
    <location>
        <begin position="270"/>
        <end position="518"/>
    </location>
</feature>
<feature type="active site" evidence="1">
    <location>
        <position position="314"/>
    </location>
</feature>
<gene>
    <name evidence="1" type="primary">mltF</name>
    <name type="ordered locus">EcolC_1119</name>
</gene>
<protein>
    <recommendedName>
        <fullName evidence="1">Membrane-bound lytic murein transglycosylase F</fullName>
        <ecNumber evidence="1">4.2.2.n1</ecNumber>
    </recommendedName>
    <alternativeName>
        <fullName evidence="1">Murein lyase F</fullName>
    </alternativeName>
</protein>
<proteinExistence type="inferred from homology"/>
<comment type="function">
    <text evidence="1">Murein-degrading enzyme that degrades murein glycan strands and insoluble, high-molecular weight murein sacculi, with the concomitant formation of a 1,6-anhydromuramoyl product. Lytic transglycosylases (LTs) play an integral role in the metabolism of the peptidoglycan (PG) sacculus. Their lytic action creates space within the PG sacculus to allow for its expansion as well as for the insertion of various structures such as secretion systems and flagella.</text>
</comment>
<comment type="catalytic activity">
    <reaction evidence="1">
        <text>Exolytic cleavage of the (1-&gt;4)-beta-glycosidic linkage between N-acetylmuramic acid (MurNAc) and N-acetylglucosamine (GlcNAc) residues in peptidoglycan, from either the reducing or the non-reducing ends of the peptidoglycan chains, with concomitant formation of a 1,6-anhydrobond in the MurNAc residue.</text>
        <dbReference type="EC" id="4.2.2.n1"/>
    </reaction>
</comment>
<comment type="subcellular location">
    <subcellularLocation>
        <location>Cell outer membrane</location>
        <topology>Peripheral membrane protein</topology>
    </subcellularLocation>
    <text evidence="1">Attached to the inner leaflet of the outer membrane.</text>
</comment>
<comment type="domain">
    <text evidence="1">The N-terminal domain does not have lytic activity and probably modulates enzymatic activity. The C-terminal domain is the catalytic active domain.</text>
</comment>
<comment type="similarity">
    <text evidence="1">In the N-terminal section; belongs to the bacterial solute-binding protein 3 family.</text>
</comment>
<comment type="similarity">
    <text evidence="1">In the C-terminal section; belongs to the transglycosylase Slt family.</text>
</comment>
<dbReference type="EC" id="4.2.2.n1" evidence="1"/>
<dbReference type="EMBL" id="CP000946">
    <property type="protein sequence ID" value="ACA76786.1"/>
    <property type="molecule type" value="Genomic_DNA"/>
</dbReference>
<dbReference type="RefSeq" id="WP_000734212.1">
    <property type="nucleotide sequence ID" value="NZ_MTFT01000002.1"/>
</dbReference>
<dbReference type="SMR" id="B1IVR9"/>
<dbReference type="CAZy" id="GH23">
    <property type="family name" value="Glycoside Hydrolase Family 23"/>
</dbReference>
<dbReference type="GeneID" id="75206251"/>
<dbReference type="KEGG" id="ecl:EcolC_1119"/>
<dbReference type="HOGENOM" id="CLU_027494_0_1_6"/>
<dbReference type="GO" id="GO:0009279">
    <property type="term" value="C:cell outer membrane"/>
    <property type="evidence" value="ECO:0007669"/>
    <property type="project" value="UniProtKB-SubCell"/>
</dbReference>
<dbReference type="GO" id="GO:0008933">
    <property type="term" value="F:peptidoglycan lytic transglycosylase activity"/>
    <property type="evidence" value="ECO:0007669"/>
    <property type="project" value="UniProtKB-UniRule"/>
</dbReference>
<dbReference type="GO" id="GO:0016998">
    <property type="term" value="P:cell wall macromolecule catabolic process"/>
    <property type="evidence" value="ECO:0007669"/>
    <property type="project" value="UniProtKB-UniRule"/>
</dbReference>
<dbReference type="GO" id="GO:0071555">
    <property type="term" value="P:cell wall organization"/>
    <property type="evidence" value="ECO:0007669"/>
    <property type="project" value="UniProtKB-KW"/>
</dbReference>
<dbReference type="GO" id="GO:0009253">
    <property type="term" value="P:peptidoglycan catabolic process"/>
    <property type="evidence" value="ECO:0007669"/>
    <property type="project" value="TreeGrafter"/>
</dbReference>
<dbReference type="CDD" id="cd13403">
    <property type="entry name" value="MLTF-like"/>
    <property type="match status" value="1"/>
</dbReference>
<dbReference type="CDD" id="cd01009">
    <property type="entry name" value="PBP2_YfhD_N"/>
    <property type="match status" value="1"/>
</dbReference>
<dbReference type="FunFam" id="1.10.530.10:FF:000003">
    <property type="entry name" value="Membrane-bound lytic murein transglycosylase F"/>
    <property type="match status" value="1"/>
</dbReference>
<dbReference type="FunFam" id="3.40.190.10:FF:000051">
    <property type="entry name" value="Membrane-bound lytic murein transglycosylase F"/>
    <property type="match status" value="1"/>
</dbReference>
<dbReference type="Gene3D" id="1.10.530.10">
    <property type="match status" value="1"/>
</dbReference>
<dbReference type="Gene3D" id="3.40.190.10">
    <property type="entry name" value="Periplasmic binding protein-like II"/>
    <property type="match status" value="2"/>
</dbReference>
<dbReference type="HAMAP" id="MF_02016">
    <property type="entry name" value="MltF"/>
    <property type="match status" value="1"/>
</dbReference>
<dbReference type="InterPro" id="IPR023346">
    <property type="entry name" value="Lysozyme-like_dom_sf"/>
</dbReference>
<dbReference type="InterPro" id="IPR023703">
    <property type="entry name" value="MltF"/>
</dbReference>
<dbReference type="InterPro" id="IPR001638">
    <property type="entry name" value="Solute-binding_3/MltF_N"/>
</dbReference>
<dbReference type="InterPro" id="IPR000189">
    <property type="entry name" value="Transglyc_AS"/>
</dbReference>
<dbReference type="InterPro" id="IPR008258">
    <property type="entry name" value="Transglycosylase_SLT_dom_1"/>
</dbReference>
<dbReference type="NCBIfam" id="NF008112">
    <property type="entry name" value="PRK10859.1"/>
    <property type="match status" value="1"/>
</dbReference>
<dbReference type="PANTHER" id="PTHR35936">
    <property type="entry name" value="MEMBRANE-BOUND LYTIC MUREIN TRANSGLYCOSYLASE F"/>
    <property type="match status" value="1"/>
</dbReference>
<dbReference type="PANTHER" id="PTHR35936:SF32">
    <property type="entry name" value="MEMBRANE-BOUND LYTIC MUREIN TRANSGLYCOSYLASE F"/>
    <property type="match status" value="1"/>
</dbReference>
<dbReference type="Pfam" id="PF00497">
    <property type="entry name" value="SBP_bac_3"/>
    <property type="match status" value="1"/>
</dbReference>
<dbReference type="Pfam" id="PF01464">
    <property type="entry name" value="SLT"/>
    <property type="match status" value="1"/>
</dbReference>
<dbReference type="SMART" id="SM00062">
    <property type="entry name" value="PBPb"/>
    <property type="match status" value="1"/>
</dbReference>
<dbReference type="SUPFAM" id="SSF53955">
    <property type="entry name" value="Lysozyme-like"/>
    <property type="match status" value="1"/>
</dbReference>
<dbReference type="SUPFAM" id="SSF53850">
    <property type="entry name" value="Periplasmic binding protein-like II"/>
    <property type="match status" value="1"/>
</dbReference>
<dbReference type="PROSITE" id="PS00922">
    <property type="entry name" value="TRANSGLYCOSYLASE"/>
    <property type="match status" value="1"/>
</dbReference>
<name>MLTF_ECOLC</name>
<accession>B1IVR9</accession>
<keyword id="KW-0998">Cell outer membrane</keyword>
<keyword id="KW-0961">Cell wall biogenesis/degradation</keyword>
<keyword id="KW-0456">Lyase</keyword>
<keyword id="KW-0472">Membrane</keyword>
<keyword id="KW-0732">Signal</keyword>